<name>DHQS_SOLLC</name>
<keyword id="KW-0028">Amino-acid biosynthesis</keyword>
<keyword id="KW-0057">Aromatic amino acid biosynthesis</keyword>
<keyword id="KW-0150">Chloroplast</keyword>
<keyword id="KW-0456">Lyase</keyword>
<keyword id="KW-0479">Metal-binding</keyword>
<keyword id="KW-0520">NAD</keyword>
<keyword id="KW-0934">Plastid</keyword>
<keyword id="KW-1185">Reference proteome</keyword>
<keyword id="KW-0809">Transit peptide</keyword>
<comment type="function">
    <text>Catalyzes the second step in the shikimate pathway.</text>
</comment>
<comment type="catalytic activity">
    <reaction>
        <text>7-phospho-2-dehydro-3-deoxy-D-arabino-heptonate = 3-dehydroquinate + phosphate</text>
        <dbReference type="Rhea" id="RHEA:21968"/>
        <dbReference type="ChEBI" id="CHEBI:32364"/>
        <dbReference type="ChEBI" id="CHEBI:43474"/>
        <dbReference type="ChEBI" id="CHEBI:58394"/>
        <dbReference type="EC" id="4.2.3.4"/>
    </reaction>
</comment>
<comment type="cofactor">
    <cofactor evidence="1">
        <name>a divalent metal cation</name>
        <dbReference type="ChEBI" id="CHEBI:60240"/>
    </cofactor>
</comment>
<comment type="cofactor">
    <cofactor evidence="1">
        <name>NAD(+)</name>
        <dbReference type="ChEBI" id="CHEBI:57540"/>
    </cofactor>
</comment>
<comment type="pathway">
    <text>Metabolic intermediate biosynthesis; chorismate biosynthesis; chorismate from D-erythrose 4-phosphate and phosphoenolpyruvate: step 2/7.</text>
</comment>
<comment type="subunit">
    <text evidence="1">Homodimer.</text>
</comment>
<comment type="subcellular location">
    <subcellularLocation>
        <location evidence="4">Plastid</location>
        <location evidence="4">Chloroplast</location>
    </subcellularLocation>
</comment>
<comment type="tissue specificity">
    <text evidence="3">Highly expressed in roots. Lower expression in stems, flowers and cotyledons. Barely detected in leaves.</text>
</comment>
<comment type="induction">
    <text evidence="3">Up-regulated by elicitor.</text>
</comment>
<comment type="similarity">
    <text evidence="4">Belongs to the sugar phosphate cyclases superfamily. Dehydroquinate synthase family.</text>
</comment>
<gene>
    <name type="primary">DHQS</name>
    <name type="synonym">AROB</name>
    <name type="ordered locus">Solyc02g083590</name>
    <name type="ORF">LOC544273</name>
</gene>
<sequence>MASSFCPKQALSFTNSTHQLHQSRAIPRDIHVRFPAPVSSPSSRCGLKSKATTRLKVLATSATKVMDHSSSKASSQAPTVVEVDLGTRSYPIYIGAGLLDQPDLLQRHIHGKRVLVVTNTTVAPLYLDKTISALTDGNPNVTVESVILPDGEQFKNMETLMKVFDKAIESRLDRRCTFVALGGGVIGDMCGYAAASYLRGVNFIQIPTTVMAQVDSSVGGKTGINHPLGKNMIGAFYQPQCVLIDTDTLNTLPDRELASGLAEVIKYGLIRDAEFFEWQEQNMPLLLARDPTAFTYAIKRSCENKADVVSQDEKESGVRATLNLGHTFGHAVETGVGYGQWLHGEAVAAGTVMAVDMSRRLGWIDDSLVQRVQKILQQAKLPTSPPETMTVEMFKSIMAVDKKVADGKLRLILLKGSLGNCVFTGDYDQKALDETLRAFSKS</sequence>
<reference key="1">
    <citation type="journal article" date="1996" name="Plant Mol. Biol.">
        <title>Cloning of a cDNA encoding a 3-dehydroquinate synthase from a higher plant, and analysis of the organ-specific and elicitor-induced expression of the corresponding gene.</title>
        <authorList>
            <person name="Bischoff M."/>
            <person name="Rosler J."/>
            <person name="Raesecke H.R."/>
            <person name="Gorlach J."/>
            <person name="Amrhein N."/>
            <person name="Schmid J."/>
        </authorList>
    </citation>
    <scope>NUCLEOTIDE SEQUENCE [MRNA]</scope>
    <scope>TISSUE SPECIFICITY</scope>
    <scope>INDUCTION BY ELICITOR</scope>
    <source>
        <strain>cv. UC82B</strain>
    </source>
</reference>
<reference key="2">
    <citation type="journal article" date="2012" name="Nature">
        <title>The tomato genome sequence provides insights into fleshy fruit evolution.</title>
        <authorList>
            <consortium name="Tomato Genome Consortium"/>
        </authorList>
    </citation>
    <scope>NUCLEOTIDE SEQUENCE [LARGE SCALE GENOMIC DNA]</scope>
    <source>
        <strain>cv. Heinz 1706</strain>
    </source>
</reference>
<evidence type="ECO:0000250" key="1"/>
<evidence type="ECO:0000255" key="2"/>
<evidence type="ECO:0000269" key="3">
    <source>
    </source>
</evidence>
<evidence type="ECO:0000305" key="4"/>
<organism>
    <name type="scientific">Solanum lycopersicum</name>
    <name type="common">Tomato</name>
    <name type="synonym">Lycopersicon esculentum</name>
    <dbReference type="NCBI Taxonomy" id="4081"/>
    <lineage>
        <taxon>Eukaryota</taxon>
        <taxon>Viridiplantae</taxon>
        <taxon>Streptophyta</taxon>
        <taxon>Embryophyta</taxon>
        <taxon>Tracheophyta</taxon>
        <taxon>Spermatophyta</taxon>
        <taxon>Magnoliopsida</taxon>
        <taxon>eudicotyledons</taxon>
        <taxon>Gunneridae</taxon>
        <taxon>Pentapetalae</taxon>
        <taxon>asterids</taxon>
        <taxon>lamiids</taxon>
        <taxon>Solanales</taxon>
        <taxon>Solanaceae</taxon>
        <taxon>Solanoideae</taxon>
        <taxon>Solaneae</taxon>
        <taxon>Solanum</taxon>
        <taxon>Solanum subgen. Lycopersicon</taxon>
    </lineage>
</organism>
<dbReference type="EC" id="4.2.3.4"/>
<dbReference type="EMBL" id="L46847">
    <property type="protein sequence ID" value="AAL77575.1"/>
    <property type="molecule type" value="mRNA"/>
</dbReference>
<dbReference type="RefSeq" id="NP_001233863.1">
    <property type="nucleotide sequence ID" value="NM_001246934.1"/>
</dbReference>
<dbReference type="SMR" id="Q8RU74"/>
<dbReference type="FunCoup" id="Q8RU74">
    <property type="interactions" value="1158"/>
</dbReference>
<dbReference type="STRING" id="4081.Q8RU74"/>
<dbReference type="PaxDb" id="4081-Solyc02g083590.2.1"/>
<dbReference type="GeneID" id="544273"/>
<dbReference type="KEGG" id="sly:544273"/>
<dbReference type="eggNOG" id="KOG0692">
    <property type="taxonomic scope" value="Eukaryota"/>
</dbReference>
<dbReference type="HOGENOM" id="CLU_001201_0_2_1"/>
<dbReference type="InParanoid" id="Q8RU74"/>
<dbReference type="OrthoDB" id="197068at2759"/>
<dbReference type="PhylomeDB" id="Q8RU74"/>
<dbReference type="UniPathway" id="UPA00053">
    <property type="reaction ID" value="UER00085"/>
</dbReference>
<dbReference type="Proteomes" id="UP000004994">
    <property type="component" value="Unplaced"/>
</dbReference>
<dbReference type="GO" id="GO:0009507">
    <property type="term" value="C:chloroplast"/>
    <property type="evidence" value="ECO:0007669"/>
    <property type="project" value="UniProtKB-SubCell"/>
</dbReference>
<dbReference type="GO" id="GO:0003856">
    <property type="term" value="F:3-dehydroquinate synthase activity"/>
    <property type="evidence" value="ECO:0000318"/>
    <property type="project" value="GO_Central"/>
</dbReference>
<dbReference type="GO" id="GO:0046872">
    <property type="term" value="F:metal ion binding"/>
    <property type="evidence" value="ECO:0007669"/>
    <property type="project" value="UniProtKB-KW"/>
</dbReference>
<dbReference type="GO" id="GO:0008652">
    <property type="term" value="P:amino acid biosynthetic process"/>
    <property type="evidence" value="ECO:0007669"/>
    <property type="project" value="UniProtKB-KW"/>
</dbReference>
<dbReference type="GO" id="GO:0009073">
    <property type="term" value="P:aromatic amino acid family biosynthetic process"/>
    <property type="evidence" value="ECO:0000318"/>
    <property type="project" value="GO_Central"/>
</dbReference>
<dbReference type="GO" id="GO:0009423">
    <property type="term" value="P:chorismate biosynthetic process"/>
    <property type="evidence" value="ECO:0000304"/>
    <property type="project" value="UniProtKB"/>
</dbReference>
<dbReference type="CDD" id="cd08195">
    <property type="entry name" value="DHQS"/>
    <property type="match status" value="1"/>
</dbReference>
<dbReference type="FunFam" id="1.20.1090.10:FF:000002">
    <property type="entry name" value="3-dehydroquinate synthase"/>
    <property type="match status" value="1"/>
</dbReference>
<dbReference type="FunFam" id="3.40.50.1970:FF:000001">
    <property type="entry name" value="3-dehydroquinate synthase"/>
    <property type="match status" value="1"/>
</dbReference>
<dbReference type="Gene3D" id="3.40.50.1970">
    <property type="match status" value="1"/>
</dbReference>
<dbReference type="Gene3D" id="1.20.1090.10">
    <property type="entry name" value="Dehydroquinate synthase-like - alpha domain"/>
    <property type="match status" value="1"/>
</dbReference>
<dbReference type="HAMAP" id="MF_00110">
    <property type="entry name" value="DHQ_synthase"/>
    <property type="match status" value="1"/>
</dbReference>
<dbReference type="InterPro" id="IPR050071">
    <property type="entry name" value="Dehydroquinate_synthase"/>
</dbReference>
<dbReference type="InterPro" id="IPR016037">
    <property type="entry name" value="DHQ_synth_AroB"/>
</dbReference>
<dbReference type="InterPro" id="IPR030960">
    <property type="entry name" value="DHQS/DOIS_N"/>
</dbReference>
<dbReference type="InterPro" id="IPR056179">
    <property type="entry name" value="DHQS_C"/>
</dbReference>
<dbReference type="NCBIfam" id="TIGR01357">
    <property type="entry name" value="aroB"/>
    <property type="match status" value="1"/>
</dbReference>
<dbReference type="PANTHER" id="PTHR43622">
    <property type="entry name" value="3-DEHYDROQUINATE SYNTHASE"/>
    <property type="match status" value="1"/>
</dbReference>
<dbReference type="PANTHER" id="PTHR43622:SF7">
    <property type="entry name" value="3-DEHYDROQUINATE SYNTHASE, CHLOROPLASTIC"/>
    <property type="match status" value="1"/>
</dbReference>
<dbReference type="Pfam" id="PF01761">
    <property type="entry name" value="DHQ_synthase"/>
    <property type="match status" value="1"/>
</dbReference>
<dbReference type="Pfam" id="PF24621">
    <property type="entry name" value="DHQS_C"/>
    <property type="match status" value="1"/>
</dbReference>
<dbReference type="SUPFAM" id="SSF56796">
    <property type="entry name" value="Dehydroquinate synthase-like"/>
    <property type="match status" value="1"/>
</dbReference>
<protein>
    <recommendedName>
        <fullName>3-dehydroquinate synthase, chloroplastic</fullName>
        <ecNumber>4.2.3.4</ecNumber>
    </recommendedName>
</protein>
<feature type="transit peptide" description="Chloroplast" evidence="2">
    <location>
        <begin position="1"/>
        <end position="61"/>
    </location>
</feature>
<feature type="chain" id="PRO_0000425859" description="3-dehydroquinate synthase, chloroplastic">
    <location>
        <begin position="62"/>
        <end position="442"/>
    </location>
</feature>
<feature type="binding site" evidence="1">
    <location>
        <position position="119"/>
    </location>
    <ligand>
        <name>NAD(+)</name>
        <dbReference type="ChEBI" id="CHEBI:57540"/>
    </ligand>
</feature>
<feature type="binding site" evidence="1">
    <location>
        <begin position="150"/>
        <end position="152"/>
    </location>
    <ligand>
        <name>NAD(+)</name>
        <dbReference type="ChEBI" id="CHEBI:57540"/>
    </ligand>
</feature>
<feature type="binding site" evidence="1">
    <location>
        <position position="155"/>
    </location>
    <ligand>
        <name>NAD(+)</name>
        <dbReference type="ChEBI" id="CHEBI:57540"/>
    </ligand>
</feature>
<feature type="binding site" evidence="1">
    <location>
        <begin position="183"/>
        <end position="188"/>
    </location>
    <ligand>
        <name>NAD(+)</name>
        <dbReference type="ChEBI" id="CHEBI:57540"/>
    </ligand>
</feature>
<feature type="binding site" evidence="1">
    <location>
        <begin position="208"/>
        <end position="209"/>
    </location>
    <ligand>
        <name>NAD(+)</name>
        <dbReference type="ChEBI" id="CHEBI:57540"/>
    </ligand>
</feature>
<feature type="binding site" evidence="1">
    <location>
        <position position="221"/>
    </location>
    <ligand>
        <name>NAD(+)</name>
        <dbReference type="ChEBI" id="CHEBI:57540"/>
    </ligand>
</feature>
<feature type="binding site" evidence="1">
    <location>
        <position position="230"/>
    </location>
    <ligand>
        <name>NAD(+)</name>
        <dbReference type="ChEBI" id="CHEBI:57540"/>
    </ligand>
</feature>
<feature type="binding site" evidence="1">
    <location>
        <begin position="248"/>
        <end position="251"/>
    </location>
    <ligand>
        <name>NAD(+)</name>
        <dbReference type="ChEBI" id="CHEBI:57540"/>
    </ligand>
</feature>
<feature type="binding site" evidence="1">
    <location>
        <position position="263"/>
    </location>
    <ligand>
        <name>a divalent metal cation</name>
        <dbReference type="ChEBI" id="CHEBI:60240"/>
    </ligand>
</feature>
<feature type="binding site" evidence="1">
    <location>
        <position position="305"/>
    </location>
    <ligand>
        <name>NAD(+)</name>
        <dbReference type="ChEBI" id="CHEBI:57540"/>
    </ligand>
</feature>
<feature type="binding site" evidence="1">
    <location>
        <position position="326"/>
    </location>
    <ligand>
        <name>a divalent metal cation</name>
        <dbReference type="ChEBI" id="CHEBI:60240"/>
    </ligand>
</feature>
<feature type="binding site" evidence="1">
    <location>
        <position position="343"/>
    </location>
    <ligand>
        <name>a divalent metal cation</name>
        <dbReference type="ChEBI" id="CHEBI:60240"/>
    </ligand>
</feature>
<accession>Q8RU74</accession>
<proteinExistence type="evidence at transcript level"/>